<keyword id="KW-0413">Isomerase</keyword>
<keyword id="KW-1185">Reference proteome</keyword>
<keyword id="KW-0697">Rotamase</keyword>
<feature type="chain" id="PRO_0000331280" description="FK506-binding protein 1">
    <location>
        <begin position="1"/>
        <end position="107"/>
    </location>
</feature>
<feature type="domain" description="PPIase FKBP-type" evidence="2">
    <location>
        <begin position="19"/>
        <end position="107"/>
    </location>
</feature>
<sequence>MGVEITIIKEGKGNIPPVGSNVTVHHAGTLTNGTVFDSSRKRGQPFNFKLGAGQVIKGWDEGVAKMKVGETSKLTISPDFGYGARGAGGVIPPNATLVFEVELITFK</sequence>
<proteinExistence type="inferred from homology"/>
<reference key="1">
    <citation type="journal article" date="2002" name="Nature">
        <title>Sequence and analysis of chromosome 2 of Dictyostelium discoideum.</title>
        <authorList>
            <person name="Gloeckner G."/>
            <person name="Eichinger L."/>
            <person name="Szafranski K."/>
            <person name="Pachebat J.A."/>
            <person name="Bankier A.T."/>
            <person name="Dear P.H."/>
            <person name="Lehmann R."/>
            <person name="Baumgart C."/>
            <person name="Parra G."/>
            <person name="Abril J.F."/>
            <person name="Guigo R."/>
            <person name="Kumpf K."/>
            <person name="Tunggal B."/>
            <person name="Cox E.C."/>
            <person name="Quail M.A."/>
            <person name="Platzer M."/>
            <person name="Rosenthal A."/>
            <person name="Noegel A.A."/>
        </authorList>
    </citation>
    <scope>NUCLEOTIDE SEQUENCE [LARGE SCALE GENOMIC DNA]</scope>
    <source>
        <strain>AX4</strain>
    </source>
</reference>
<reference key="2">
    <citation type="journal article" date="2005" name="Nature">
        <title>The genome of the social amoeba Dictyostelium discoideum.</title>
        <authorList>
            <person name="Eichinger L."/>
            <person name="Pachebat J.A."/>
            <person name="Gloeckner G."/>
            <person name="Rajandream M.A."/>
            <person name="Sucgang R."/>
            <person name="Berriman M."/>
            <person name="Song J."/>
            <person name="Olsen R."/>
            <person name="Szafranski K."/>
            <person name="Xu Q."/>
            <person name="Tunggal B."/>
            <person name="Kummerfeld S."/>
            <person name="Madera M."/>
            <person name="Konfortov B.A."/>
            <person name="Rivero F."/>
            <person name="Bankier A.T."/>
            <person name="Lehmann R."/>
            <person name="Hamlin N."/>
            <person name="Davies R."/>
            <person name="Gaudet P."/>
            <person name="Fey P."/>
            <person name="Pilcher K."/>
            <person name="Chen G."/>
            <person name="Saunders D."/>
            <person name="Sodergren E.J."/>
            <person name="Davis P."/>
            <person name="Kerhornou A."/>
            <person name="Nie X."/>
            <person name="Hall N."/>
            <person name="Anjard C."/>
            <person name="Hemphill L."/>
            <person name="Bason N."/>
            <person name="Farbrother P."/>
            <person name="Desany B."/>
            <person name="Just E."/>
            <person name="Morio T."/>
            <person name="Rost R."/>
            <person name="Churcher C.M."/>
            <person name="Cooper J."/>
            <person name="Haydock S."/>
            <person name="van Driessche N."/>
            <person name="Cronin A."/>
            <person name="Goodhead I."/>
            <person name="Muzny D.M."/>
            <person name="Mourier T."/>
            <person name="Pain A."/>
            <person name="Lu M."/>
            <person name="Harper D."/>
            <person name="Lindsay R."/>
            <person name="Hauser H."/>
            <person name="James K.D."/>
            <person name="Quiles M."/>
            <person name="Madan Babu M."/>
            <person name="Saito T."/>
            <person name="Buchrieser C."/>
            <person name="Wardroper A."/>
            <person name="Felder M."/>
            <person name="Thangavelu M."/>
            <person name="Johnson D."/>
            <person name="Knights A."/>
            <person name="Loulseged H."/>
            <person name="Mungall K.L."/>
            <person name="Oliver K."/>
            <person name="Price C."/>
            <person name="Quail M.A."/>
            <person name="Urushihara H."/>
            <person name="Hernandez J."/>
            <person name="Rabbinowitsch E."/>
            <person name="Steffen D."/>
            <person name="Sanders M."/>
            <person name="Ma J."/>
            <person name="Kohara Y."/>
            <person name="Sharp S."/>
            <person name="Simmonds M.N."/>
            <person name="Spiegler S."/>
            <person name="Tivey A."/>
            <person name="Sugano S."/>
            <person name="White B."/>
            <person name="Walker D."/>
            <person name="Woodward J.R."/>
            <person name="Winckler T."/>
            <person name="Tanaka Y."/>
            <person name="Shaulsky G."/>
            <person name="Schleicher M."/>
            <person name="Weinstock G.M."/>
            <person name="Rosenthal A."/>
            <person name="Cox E.C."/>
            <person name="Chisholm R.L."/>
            <person name="Gibbs R.A."/>
            <person name="Loomis W.F."/>
            <person name="Platzer M."/>
            <person name="Kay R.R."/>
            <person name="Williams J.G."/>
            <person name="Dear P.H."/>
            <person name="Noegel A.A."/>
            <person name="Barrell B.G."/>
            <person name="Kuspa A."/>
        </authorList>
    </citation>
    <scope>NUCLEOTIDE SEQUENCE [LARGE SCALE GENOMIC DNA]</scope>
    <source>
        <strain>AX4</strain>
    </source>
</reference>
<gene>
    <name type="primary">fkbp1</name>
    <name type="ORF">DDB_G0275227</name>
</gene>
<organism>
    <name type="scientific">Dictyostelium discoideum</name>
    <name type="common">Social amoeba</name>
    <dbReference type="NCBI Taxonomy" id="44689"/>
    <lineage>
        <taxon>Eukaryota</taxon>
        <taxon>Amoebozoa</taxon>
        <taxon>Evosea</taxon>
        <taxon>Eumycetozoa</taxon>
        <taxon>Dictyostelia</taxon>
        <taxon>Dictyosteliales</taxon>
        <taxon>Dictyosteliaceae</taxon>
        <taxon>Dictyostelium</taxon>
    </lineage>
</organism>
<evidence type="ECO:0000250" key="1"/>
<evidence type="ECO:0000255" key="2">
    <source>
        <dbReference type="PROSITE-ProRule" id="PRU00277"/>
    </source>
</evidence>
<evidence type="ECO:0000305" key="3"/>
<comment type="function">
    <text evidence="1">PPIases accelerate the folding of proteins by catalyzing the cis-trans isomerization of proline imidic peptide bonds in oligopeptides.</text>
</comment>
<comment type="catalytic activity">
    <reaction>
        <text>[protein]-peptidylproline (omega=180) = [protein]-peptidylproline (omega=0)</text>
        <dbReference type="Rhea" id="RHEA:16237"/>
        <dbReference type="Rhea" id="RHEA-COMP:10747"/>
        <dbReference type="Rhea" id="RHEA-COMP:10748"/>
        <dbReference type="ChEBI" id="CHEBI:83833"/>
        <dbReference type="ChEBI" id="CHEBI:83834"/>
        <dbReference type="EC" id="5.2.1.8"/>
    </reaction>
</comment>
<comment type="activity regulation">
    <text evidence="1">Inhibited by both FK506 and rapamycin.</text>
</comment>
<comment type="similarity">
    <text evidence="3">Belongs to the FKBP-type PPIase family.</text>
</comment>
<accession>Q554J3</accession>
<accession>Q8SSW6</accession>
<dbReference type="EC" id="5.2.1.8"/>
<dbReference type="EMBL" id="AAFI02000013">
    <property type="protein sequence ID" value="EAL69894.1"/>
    <property type="molecule type" value="Genomic_DNA"/>
</dbReference>
<dbReference type="RefSeq" id="XP_643718.1">
    <property type="nucleotide sequence ID" value="XM_638626.1"/>
</dbReference>
<dbReference type="SMR" id="Q554J3"/>
<dbReference type="FunCoup" id="Q554J3">
    <property type="interactions" value="18"/>
</dbReference>
<dbReference type="STRING" id="44689.Q554J3"/>
<dbReference type="PaxDb" id="44689-DDB0233549"/>
<dbReference type="EnsemblProtists" id="EAL69894">
    <property type="protein sequence ID" value="EAL69894"/>
    <property type="gene ID" value="DDB_G0275227"/>
</dbReference>
<dbReference type="GeneID" id="8619758"/>
<dbReference type="KEGG" id="ddi:DDB_G0275227"/>
<dbReference type="dictyBase" id="DDB_G0275227"/>
<dbReference type="VEuPathDB" id="AmoebaDB:DDB_G0275227"/>
<dbReference type="eggNOG" id="KOG0544">
    <property type="taxonomic scope" value="Eukaryota"/>
</dbReference>
<dbReference type="HOGENOM" id="CLU_013615_12_0_1"/>
<dbReference type="InParanoid" id="Q554J3"/>
<dbReference type="OMA" id="EQFDASW"/>
<dbReference type="PhylomeDB" id="Q554J3"/>
<dbReference type="PRO" id="PR:Q554J3"/>
<dbReference type="Proteomes" id="UP000002195">
    <property type="component" value="Chromosome 2"/>
</dbReference>
<dbReference type="GO" id="GO:0005737">
    <property type="term" value="C:cytoplasm"/>
    <property type="evidence" value="ECO:0000318"/>
    <property type="project" value="GO_Central"/>
</dbReference>
<dbReference type="GO" id="GO:0003755">
    <property type="term" value="F:peptidyl-prolyl cis-trans isomerase activity"/>
    <property type="evidence" value="ECO:0000318"/>
    <property type="project" value="GO_Central"/>
</dbReference>
<dbReference type="FunFam" id="3.10.50.40:FF:000025">
    <property type="entry name" value="Peptidylprolyl isomerase"/>
    <property type="match status" value="1"/>
</dbReference>
<dbReference type="Gene3D" id="3.10.50.40">
    <property type="match status" value="1"/>
</dbReference>
<dbReference type="InterPro" id="IPR050689">
    <property type="entry name" value="FKBP-type_PPIase"/>
</dbReference>
<dbReference type="InterPro" id="IPR046357">
    <property type="entry name" value="PPIase_dom_sf"/>
</dbReference>
<dbReference type="InterPro" id="IPR001179">
    <property type="entry name" value="PPIase_FKBP_dom"/>
</dbReference>
<dbReference type="PANTHER" id="PTHR10516:SF443">
    <property type="entry name" value="FK506-BINDING PROTEIN 59-RELATED"/>
    <property type="match status" value="1"/>
</dbReference>
<dbReference type="PANTHER" id="PTHR10516">
    <property type="entry name" value="PEPTIDYL-PROLYL CIS-TRANS ISOMERASE"/>
    <property type="match status" value="1"/>
</dbReference>
<dbReference type="Pfam" id="PF00254">
    <property type="entry name" value="FKBP_C"/>
    <property type="match status" value="1"/>
</dbReference>
<dbReference type="SUPFAM" id="SSF54534">
    <property type="entry name" value="FKBP-like"/>
    <property type="match status" value="1"/>
</dbReference>
<dbReference type="PROSITE" id="PS50059">
    <property type="entry name" value="FKBP_PPIASE"/>
    <property type="match status" value="1"/>
</dbReference>
<protein>
    <recommendedName>
        <fullName>FK506-binding protein 1</fullName>
        <ecNumber>5.2.1.8</ecNumber>
    </recommendedName>
    <alternativeName>
        <fullName>Peptidyl-prolyl cis-trans isomerase</fullName>
        <shortName>PPIase</shortName>
    </alternativeName>
    <alternativeName>
        <fullName>Rotamase</fullName>
    </alternativeName>
</protein>
<name>FKBP1_DICDI</name>